<feature type="chain" id="PRO_0000321442" description="Argininosuccinate lyase">
    <location>
        <begin position="1"/>
        <end position="467"/>
    </location>
</feature>
<name>ARLY_METPP</name>
<protein>
    <recommendedName>
        <fullName evidence="1">Argininosuccinate lyase</fullName>
        <shortName evidence="1">ASAL</shortName>
        <ecNumber evidence="1">4.3.2.1</ecNumber>
    </recommendedName>
    <alternativeName>
        <fullName evidence="1">Arginosuccinase</fullName>
    </alternativeName>
</protein>
<accession>A2SET3</accession>
<sequence>MSNDNQLDKKSQAWSALFSEPMSELVKRYTASVDFDQRLWRADIDGSLAHAEMLAAQGILTAEDHAAIVRGMAQVVAEIESGAFEWKLDLEDVHLNIEARLTQLVGDAGKRLHTGRSRNDQVATDVRLWLRGEIDAIGALLSALQRALVDVAEPNAEVILPGFTHLQVAQPVSFGHHLLAYVEMFARDAERLLDVRRRVNRLPLGAAALAGTSYPLDRERVARTLGFDGVCQNSLDAVSDRDFAIEFTAAASLCMVHVSRLSEELILWMSQSFGFIDLADRFCTGSSIMPQKKNPDVPELARGKTGRVVGHLMALITLMKGQPLAYNKDNQEDKEPLFDTVDTLKDTLRIFAELVGGISVKPEAMERAALKGYATATDLADYLVKKGLPFRDAHEVVAHAVKTAIAQGRDLSELPLPALQAFHPAITDDVHAALTLRGSLDARQVLGGTAPAQVRFQIARHRTRLGS</sequence>
<keyword id="KW-0028">Amino-acid biosynthesis</keyword>
<keyword id="KW-0055">Arginine biosynthesis</keyword>
<keyword id="KW-0963">Cytoplasm</keyword>
<keyword id="KW-0456">Lyase</keyword>
<keyword id="KW-1185">Reference proteome</keyword>
<dbReference type="EC" id="4.3.2.1" evidence="1"/>
<dbReference type="EMBL" id="CP000555">
    <property type="protein sequence ID" value="ABM94072.1"/>
    <property type="molecule type" value="Genomic_DNA"/>
</dbReference>
<dbReference type="RefSeq" id="WP_011828709.1">
    <property type="nucleotide sequence ID" value="NC_008825.1"/>
</dbReference>
<dbReference type="SMR" id="A2SET3"/>
<dbReference type="STRING" id="420662.Mpe_A1111"/>
<dbReference type="KEGG" id="mpt:Mpe_A1111"/>
<dbReference type="eggNOG" id="COG0165">
    <property type="taxonomic scope" value="Bacteria"/>
</dbReference>
<dbReference type="HOGENOM" id="CLU_027272_2_3_4"/>
<dbReference type="UniPathway" id="UPA00068">
    <property type="reaction ID" value="UER00114"/>
</dbReference>
<dbReference type="Proteomes" id="UP000000366">
    <property type="component" value="Chromosome"/>
</dbReference>
<dbReference type="GO" id="GO:0005829">
    <property type="term" value="C:cytosol"/>
    <property type="evidence" value="ECO:0007669"/>
    <property type="project" value="TreeGrafter"/>
</dbReference>
<dbReference type="GO" id="GO:0004056">
    <property type="term" value="F:argininosuccinate lyase activity"/>
    <property type="evidence" value="ECO:0007669"/>
    <property type="project" value="UniProtKB-UniRule"/>
</dbReference>
<dbReference type="GO" id="GO:0042450">
    <property type="term" value="P:arginine biosynthetic process via ornithine"/>
    <property type="evidence" value="ECO:0007669"/>
    <property type="project" value="InterPro"/>
</dbReference>
<dbReference type="GO" id="GO:0006526">
    <property type="term" value="P:L-arginine biosynthetic process"/>
    <property type="evidence" value="ECO:0007669"/>
    <property type="project" value="UniProtKB-UniRule"/>
</dbReference>
<dbReference type="CDD" id="cd01359">
    <property type="entry name" value="Argininosuccinate_lyase"/>
    <property type="match status" value="1"/>
</dbReference>
<dbReference type="FunFam" id="1.10.275.10:FF:000002">
    <property type="entry name" value="Argininosuccinate lyase"/>
    <property type="match status" value="1"/>
</dbReference>
<dbReference type="FunFam" id="1.10.40.30:FF:000001">
    <property type="entry name" value="Argininosuccinate lyase"/>
    <property type="match status" value="1"/>
</dbReference>
<dbReference type="FunFam" id="1.20.200.10:FF:000015">
    <property type="entry name" value="argininosuccinate lyase isoform X2"/>
    <property type="match status" value="1"/>
</dbReference>
<dbReference type="Gene3D" id="1.10.40.30">
    <property type="entry name" value="Fumarase/aspartase (C-terminal domain)"/>
    <property type="match status" value="1"/>
</dbReference>
<dbReference type="Gene3D" id="1.20.200.10">
    <property type="entry name" value="Fumarase/aspartase (Central domain)"/>
    <property type="match status" value="1"/>
</dbReference>
<dbReference type="Gene3D" id="1.10.275.10">
    <property type="entry name" value="Fumarase/aspartase (N-terminal domain)"/>
    <property type="match status" value="1"/>
</dbReference>
<dbReference type="HAMAP" id="MF_00006">
    <property type="entry name" value="Arg_succ_lyase"/>
    <property type="match status" value="1"/>
</dbReference>
<dbReference type="InterPro" id="IPR029419">
    <property type="entry name" value="Arg_succ_lyase_C"/>
</dbReference>
<dbReference type="InterPro" id="IPR009049">
    <property type="entry name" value="Argininosuccinate_lyase"/>
</dbReference>
<dbReference type="InterPro" id="IPR024083">
    <property type="entry name" value="Fumarase/histidase_N"/>
</dbReference>
<dbReference type="InterPro" id="IPR020557">
    <property type="entry name" value="Fumarate_lyase_CS"/>
</dbReference>
<dbReference type="InterPro" id="IPR000362">
    <property type="entry name" value="Fumarate_lyase_fam"/>
</dbReference>
<dbReference type="InterPro" id="IPR022761">
    <property type="entry name" value="Fumarate_lyase_N"/>
</dbReference>
<dbReference type="InterPro" id="IPR008948">
    <property type="entry name" value="L-Aspartase-like"/>
</dbReference>
<dbReference type="NCBIfam" id="TIGR00838">
    <property type="entry name" value="argH"/>
    <property type="match status" value="1"/>
</dbReference>
<dbReference type="PANTHER" id="PTHR43814">
    <property type="entry name" value="ARGININOSUCCINATE LYASE"/>
    <property type="match status" value="1"/>
</dbReference>
<dbReference type="PANTHER" id="PTHR43814:SF1">
    <property type="entry name" value="ARGININOSUCCINATE LYASE"/>
    <property type="match status" value="1"/>
</dbReference>
<dbReference type="Pfam" id="PF14698">
    <property type="entry name" value="ASL_C2"/>
    <property type="match status" value="1"/>
</dbReference>
<dbReference type="Pfam" id="PF00206">
    <property type="entry name" value="Lyase_1"/>
    <property type="match status" value="1"/>
</dbReference>
<dbReference type="PRINTS" id="PR00145">
    <property type="entry name" value="ARGSUCLYASE"/>
</dbReference>
<dbReference type="PRINTS" id="PR00149">
    <property type="entry name" value="FUMRATELYASE"/>
</dbReference>
<dbReference type="SUPFAM" id="SSF48557">
    <property type="entry name" value="L-aspartase-like"/>
    <property type="match status" value="1"/>
</dbReference>
<dbReference type="PROSITE" id="PS00163">
    <property type="entry name" value="FUMARATE_LYASES"/>
    <property type="match status" value="1"/>
</dbReference>
<gene>
    <name evidence="1" type="primary">argH</name>
    <name type="ordered locus">Mpe_A1111</name>
</gene>
<organism>
    <name type="scientific">Methylibium petroleiphilum (strain ATCC BAA-1232 / LMG 22953 / PM1)</name>
    <dbReference type="NCBI Taxonomy" id="420662"/>
    <lineage>
        <taxon>Bacteria</taxon>
        <taxon>Pseudomonadati</taxon>
        <taxon>Pseudomonadota</taxon>
        <taxon>Betaproteobacteria</taxon>
        <taxon>Burkholderiales</taxon>
        <taxon>Sphaerotilaceae</taxon>
        <taxon>Methylibium</taxon>
    </lineage>
</organism>
<comment type="catalytic activity">
    <reaction evidence="1">
        <text>2-(N(omega)-L-arginino)succinate = fumarate + L-arginine</text>
        <dbReference type="Rhea" id="RHEA:24020"/>
        <dbReference type="ChEBI" id="CHEBI:29806"/>
        <dbReference type="ChEBI" id="CHEBI:32682"/>
        <dbReference type="ChEBI" id="CHEBI:57472"/>
        <dbReference type="EC" id="4.3.2.1"/>
    </reaction>
</comment>
<comment type="pathway">
    <text evidence="1">Amino-acid biosynthesis; L-arginine biosynthesis; L-arginine from L-ornithine and carbamoyl phosphate: step 3/3.</text>
</comment>
<comment type="subcellular location">
    <subcellularLocation>
        <location evidence="1">Cytoplasm</location>
    </subcellularLocation>
</comment>
<comment type="similarity">
    <text evidence="1">Belongs to the lyase 1 family. Argininosuccinate lyase subfamily.</text>
</comment>
<evidence type="ECO:0000255" key="1">
    <source>
        <dbReference type="HAMAP-Rule" id="MF_00006"/>
    </source>
</evidence>
<proteinExistence type="inferred from homology"/>
<reference key="1">
    <citation type="journal article" date="2007" name="J. Bacteriol.">
        <title>Whole-genome analysis of the methyl tert-butyl ether-degrading beta-proteobacterium Methylibium petroleiphilum PM1.</title>
        <authorList>
            <person name="Kane S.R."/>
            <person name="Chakicherla A.Y."/>
            <person name="Chain P.S.G."/>
            <person name="Schmidt R."/>
            <person name="Shin M.W."/>
            <person name="Legler T.C."/>
            <person name="Scow K.M."/>
            <person name="Larimer F.W."/>
            <person name="Lucas S.M."/>
            <person name="Richardson P.M."/>
            <person name="Hristova K.R."/>
        </authorList>
    </citation>
    <scope>NUCLEOTIDE SEQUENCE [LARGE SCALE GENOMIC DNA]</scope>
    <source>
        <strain>ATCC BAA-1232 / LMG 22953 / PM1</strain>
    </source>
</reference>